<organism>
    <name type="scientific">Arabidopsis thaliana</name>
    <name type="common">Mouse-ear cress</name>
    <dbReference type="NCBI Taxonomy" id="3702"/>
    <lineage>
        <taxon>Eukaryota</taxon>
        <taxon>Viridiplantae</taxon>
        <taxon>Streptophyta</taxon>
        <taxon>Embryophyta</taxon>
        <taxon>Tracheophyta</taxon>
        <taxon>Spermatophyta</taxon>
        <taxon>Magnoliopsida</taxon>
        <taxon>eudicotyledons</taxon>
        <taxon>Gunneridae</taxon>
        <taxon>Pentapetalae</taxon>
        <taxon>rosids</taxon>
        <taxon>malvids</taxon>
        <taxon>Brassicales</taxon>
        <taxon>Brassicaceae</taxon>
        <taxon>Camelineae</taxon>
        <taxon>Arabidopsis</taxon>
    </lineage>
</organism>
<feature type="signal peptide" evidence="2">
    <location>
        <begin position="1"/>
        <end position="26"/>
    </location>
</feature>
<feature type="chain" id="PRO_0000379611" description="Putative defensin-like protein 29">
    <location>
        <begin position="27"/>
        <end position="79"/>
    </location>
</feature>
<feature type="disulfide bond" evidence="1">
    <location>
        <begin position="45"/>
        <end position="65"/>
    </location>
</feature>
<feature type="disulfide bond" evidence="1">
    <location>
        <begin position="51"/>
        <end position="74"/>
    </location>
</feature>
<feature type="disulfide bond" evidence="1">
    <location>
        <begin position="55"/>
        <end position="76"/>
    </location>
</feature>
<reference key="1">
    <citation type="journal article" date="2000" name="DNA Res.">
        <title>Structural analysis of Arabidopsis thaliana chromosome 3. II. Sequence features of the 4,251,695 bp regions covered by 90 P1, TAC and BAC clones.</title>
        <authorList>
            <person name="Kaneko T."/>
            <person name="Katoh T."/>
            <person name="Sato S."/>
            <person name="Nakamura Y."/>
            <person name="Asamizu E."/>
            <person name="Tabata S."/>
        </authorList>
    </citation>
    <scope>NUCLEOTIDE SEQUENCE [LARGE SCALE GENOMIC DNA]</scope>
    <source>
        <strain>cv. Columbia</strain>
    </source>
</reference>
<reference key="2">
    <citation type="journal article" date="2017" name="Plant J.">
        <title>Araport11: a complete reannotation of the Arabidopsis thaliana reference genome.</title>
        <authorList>
            <person name="Cheng C.Y."/>
            <person name="Krishnakumar V."/>
            <person name="Chan A.P."/>
            <person name="Thibaud-Nissen F."/>
            <person name="Schobel S."/>
            <person name="Town C.D."/>
        </authorList>
    </citation>
    <scope>GENOME REANNOTATION</scope>
    <source>
        <strain>cv. Columbia</strain>
    </source>
</reference>
<reference key="3">
    <citation type="journal article" date="2005" name="Plant Physiol.">
        <title>Genome organization of more than 300 defensin-like genes in Arabidopsis.</title>
        <authorList>
            <person name="Silverstein K.A.T."/>
            <person name="Graham M.A."/>
            <person name="Paape T.D."/>
            <person name="VandenBosch K.A."/>
        </authorList>
    </citation>
    <scope>GENE FAMILY</scope>
</reference>
<dbReference type="EMBL" id="AP000371">
    <property type="status" value="NOT_ANNOTATED_CDS"/>
    <property type="molecule type" value="Genomic_DNA"/>
</dbReference>
<dbReference type="EMBL" id="CP002686">
    <property type="protein sequence ID" value="AEE77370.1"/>
    <property type="molecule type" value="Genomic_DNA"/>
</dbReference>
<dbReference type="RefSeq" id="NP_001030786.1">
    <property type="nucleotide sequence ID" value="NM_001035709.1"/>
</dbReference>
<dbReference type="SMR" id="Q2V3R9"/>
<dbReference type="PaxDb" id="3702-AT3G27835.1"/>
<dbReference type="EnsemblPlants" id="AT3G27835.1">
    <property type="protein sequence ID" value="AT3G27835.1"/>
    <property type="gene ID" value="AT3G27835"/>
</dbReference>
<dbReference type="GeneID" id="3768957"/>
<dbReference type="Gramene" id="AT3G27835.1">
    <property type="protein sequence ID" value="AT3G27835.1"/>
    <property type="gene ID" value="AT3G27835"/>
</dbReference>
<dbReference type="KEGG" id="ath:AT3G27835"/>
<dbReference type="Araport" id="AT3G27835"/>
<dbReference type="TAIR" id="AT3G27835"/>
<dbReference type="eggNOG" id="ENOG502R1TH">
    <property type="taxonomic scope" value="Eukaryota"/>
</dbReference>
<dbReference type="HOGENOM" id="CLU_198547_0_0_1"/>
<dbReference type="InParanoid" id="Q2V3R9"/>
<dbReference type="OMA" id="PGGKCIK"/>
<dbReference type="PhylomeDB" id="Q2V3R9"/>
<dbReference type="PRO" id="PR:Q2V3R9"/>
<dbReference type="Proteomes" id="UP000006548">
    <property type="component" value="Chromosome 3"/>
</dbReference>
<dbReference type="ExpressionAtlas" id="Q2V3R9">
    <property type="expression patterns" value="baseline and differential"/>
</dbReference>
<dbReference type="GO" id="GO:0005576">
    <property type="term" value="C:extracellular region"/>
    <property type="evidence" value="ECO:0007669"/>
    <property type="project" value="UniProtKB-SubCell"/>
</dbReference>
<dbReference type="GO" id="GO:0050832">
    <property type="term" value="P:defense response to fungus"/>
    <property type="evidence" value="ECO:0007669"/>
    <property type="project" value="UniProtKB-KW"/>
</dbReference>
<dbReference type="GO" id="GO:0031640">
    <property type="term" value="P:killing of cells of another organism"/>
    <property type="evidence" value="ECO:0007669"/>
    <property type="project" value="UniProtKB-KW"/>
</dbReference>
<dbReference type="Gene3D" id="3.30.30.10">
    <property type="entry name" value="Knottin, scorpion toxin-like"/>
    <property type="match status" value="1"/>
</dbReference>
<dbReference type="InterPro" id="IPR036574">
    <property type="entry name" value="Scorpion_toxin-like_sf"/>
</dbReference>
<dbReference type="SUPFAM" id="SSF57095">
    <property type="entry name" value="Scorpion toxin-like"/>
    <property type="match status" value="1"/>
</dbReference>
<accession>Q2V3R9</accession>
<sequence>MASSGKCVFLVFLCMVALLAPSEVHAKSMVEVNAAHKWYIVEGLCSKFPDCNKHCKEQKFPGGTCLKLGVNMMCTCIYS</sequence>
<protein>
    <recommendedName>
        <fullName>Putative defensin-like protein 29</fullName>
    </recommendedName>
</protein>
<comment type="subcellular location">
    <subcellularLocation>
        <location evidence="1">Secreted</location>
    </subcellularLocation>
</comment>
<comment type="similarity">
    <text evidence="3">Belongs to the DEFL family.</text>
</comment>
<comment type="caution">
    <text evidence="3">Lacks 1 of the 4 disulfide bonds, which are conserved features of the family.</text>
</comment>
<name>DEF29_ARATH</name>
<evidence type="ECO:0000250" key="1"/>
<evidence type="ECO:0000255" key="2"/>
<evidence type="ECO:0000305" key="3"/>
<proteinExistence type="inferred from homology"/>
<gene>
    <name type="ordered locus">At3g27835</name>
    <name type="ORF">K16N12</name>
</gene>
<keyword id="KW-0929">Antimicrobial</keyword>
<keyword id="KW-1015">Disulfide bond</keyword>
<keyword id="KW-0295">Fungicide</keyword>
<keyword id="KW-0611">Plant defense</keyword>
<keyword id="KW-1185">Reference proteome</keyword>
<keyword id="KW-0964">Secreted</keyword>
<keyword id="KW-0732">Signal</keyword>